<evidence type="ECO:0000255" key="1">
    <source>
        <dbReference type="HAMAP-Rule" id="MF_00412"/>
    </source>
</evidence>
<sequence length="418" mass="45181">MNVALEVQTKGQRAREAARILAGLGTSKKNEALLAMARALEEEQEAILAANARDMVAGKEKGLSRALLDRLLLNEKRIRDMAAGLRELAALPDPVGEVTSMWTRPNGLQIGRVRVPLGVIGIIYEARPNVTVDAAGLCLKTGNAVILRGGSEAFYSNQALTRVISRAATAAGAPEGAIQLIETTDREAVNLLLRANDYLDVLIPRGGAGLIRTVVENATVPVIETGVGNCHVYVDAEADLDMAQRIVINAKTQRPGVCNAMETLLVHEKVADSFLPSLAAALKEKGVTIRGCERTRAIIPWAEVATETDWATEYLDLILAIRVVDSLESALEHIHRYGTKHSEAIVTTNYQTAREFLARVDAAAVYVNASTRFTDGYEFGFGAEIGISTQKLHARGPMGPEQLTTFKYIIFGSGQIRQ</sequence>
<protein>
    <recommendedName>
        <fullName evidence="1">Gamma-glutamyl phosphate reductase</fullName>
        <shortName evidence="1">GPR</shortName>
        <ecNumber evidence="1">1.2.1.41</ecNumber>
    </recommendedName>
    <alternativeName>
        <fullName evidence="1">Glutamate-5-semialdehyde dehydrogenase</fullName>
    </alternativeName>
    <alternativeName>
        <fullName evidence="1">Glutamyl-gamma-semialdehyde dehydrogenase</fullName>
        <shortName evidence="1">GSA dehydrogenase</shortName>
    </alternativeName>
</protein>
<gene>
    <name evidence="1" type="primary">proA</name>
    <name type="ordered locus">Moth_0563</name>
</gene>
<accession>Q2RKZ6</accession>
<organism>
    <name type="scientific">Moorella thermoacetica (strain ATCC 39073 / JCM 9320)</name>
    <dbReference type="NCBI Taxonomy" id="264732"/>
    <lineage>
        <taxon>Bacteria</taxon>
        <taxon>Bacillati</taxon>
        <taxon>Bacillota</taxon>
        <taxon>Clostridia</taxon>
        <taxon>Moorellales</taxon>
        <taxon>Moorellaceae</taxon>
        <taxon>Moorella</taxon>
    </lineage>
</organism>
<name>PROA_MOOTA</name>
<dbReference type="EC" id="1.2.1.41" evidence="1"/>
<dbReference type="EMBL" id="CP000232">
    <property type="protein sequence ID" value="ABC18893.1"/>
    <property type="molecule type" value="Genomic_DNA"/>
</dbReference>
<dbReference type="RefSeq" id="YP_429436.1">
    <property type="nucleotide sequence ID" value="NC_007644.1"/>
</dbReference>
<dbReference type="SMR" id="Q2RKZ6"/>
<dbReference type="STRING" id="264732.Moth_0563"/>
<dbReference type="EnsemblBacteria" id="ABC18893">
    <property type="protein sequence ID" value="ABC18893"/>
    <property type="gene ID" value="Moth_0563"/>
</dbReference>
<dbReference type="KEGG" id="mta:Moth_0563"/>
<dbReference type="PATRIC" id="fig|264732.11.peg.606"/>
<dbReference type="eggNOG" id="COG0014">
    <property type="taxonomic scope" value="Bacteria"/>
</dbReference>
<dbReference type="HOGENOM" id="CLU_030231_0_0_9"/>
<dbReference type="OrthoDB" id="9809970at2"/>
<dbReference type="UniPathway" id="UPA00098">
    <property type="reaction ID" value="UER00360"/>
</dbReference>
<dbReference type="GO" id="GO:0005737">
    <property type="term" value="C:cytoplasm"/>
    <property type="evidence" value="ECO:0007669"/>
    <property type="project" value="UniProtKB-SubCell"/>
</dbReference>
<dbReference type="GO" id="GO:0004350">
    <property type="term" value="F:glutamate-5-semialdehyde dehydrogenase activity"/>
    <property type="evidence" value="ECO:0007669"/>
    <property type="project" value="UniProtKB-UniRule"/>
</dbReference>
<dbReference type="GO" id="GO:0050661">
    <property type="term" value="F:NADP binding"/>
    <property type="evidence" value="ECO:0007669"/>
    <property type="project" value="InterPro"/>
</dbReference>
<dbReference type="GO" id="GO:0055129">
    <property type="term" value="P:L-proline biosynthetic process"/>
    <property type="evidence" value="ECO:0007669"/>
    <property type="project" value="UniProtKB-UniRule"/>
</dbReference>
<dbReference type="CDD" id="cd07079">
    <property type="entry name" value="ALDH_F18-19_ProA-GPR"/>
    <property type="match status" value="1"/>
</dbReference>
<dbReference type="FunFam" id="3.40.309.10:FF:000006">
    <property type="entry name" value="Gamma-glutamyl phosphate reductase"/>
    <property type="match status" value="1"/>
</dbReference>
<dbReference type="Gene3D" id="3.40.605.10">
    <property type="entry name" value="Aldehyde Dehydrogenase, Chain A, domain 1"/>
    <property type="match status" value="1"/>
</dbReference>
<dbReference type="Gene3D" id="3.40.309.10">
    <property type="entry name" value="Aldehyde Dehydrogenase, Chain A, domain 2"/>
    <property type="match status" value="1"/>
</dbReference>
<dbReference type="HAMAP" id="MF_00412">
    <property type="entry name" value="ProA"/>
    <property type="match status" value="1"/>
</dbReference>
<dbReference type="InterPro" id="IPR016161">
    <property type="entry name" value="Ald_DH/histidinol_DH"/>
</dbReference>
<dbReference type="InterPro" id="IPR016163">
    <property type="entry name" value="Ald_DH_C"/>
</dbReference>
<dbReference type="InterPro" id="IPR016162">
    <property type="entry name" value="Ald_DH_N"/>
</dbReference>
<dbReference type="InterPro" id="IPR015590">
    <property type="entry name" value="Aldehyde_DH_dom"/>
</dbReference>
<dbReference type="InterPro" id="IPR020593">
    <property type="entry name" value="G-glutamylP_reductase_CS"/>
</dbReference>
<dbReference type="InterPro" id="IPR012134">
    <property type="entry name" value="Glu-5-SA_DH"/>
</dbReference>
<dbReference type="InterPro" id="IPR000965">
    <property type="entry name" value="GPR_dom"/>
</dbReference>
<dbReference type="NCBIfam" id="NF001221">
    <property type="entry name" value="PRK00197.1"/>
    <property type="match status" value="1"/>
</dbReference>
<dbReference type="NCBIfam" id="TIGR00407">
    <property type="entry name" value="proA"/>
    <property type="match status" value="1"/>
</dbReference>
<dbReference type="PANTHER" id="PTHR11063:SF8">
    <property type="entry name" value="DELTA-1-PYRROLINE-5-CARBOXYLATE SYNTHASE"/>
    <property type="match status" value="1"/>
</dbReference>
<dbReference type="PANTHER" id="PTHR11063">
    <property type="entry name" value="GLUTAMATE SEMIALDEHYDE DEHYDROGENASE"/>
    <property type="match status" value="1"/>
</dbReference>
<dbReference type="Pfam" id="PF00171">
    <property type="entry name" value="Aldedh"/>
    <property type="match status" value="1"/>
</dbReference>
<dbReference type="PIRSF" id="PIRSF000151">
    <property type="entry name" value="GPR"/>
    <property type="match status" value="1"/>
</dbReference>
<dbReference type="SUPFAM" id="SSF53720">
    <property type="entry name" value="ALDH-like"/>
    <property type="match status" value="1"/>
</dbReference>
<dbReference type="PROSITE" id="PS01223">
    <property type="entry name" value="PROA"/>
    <property type="match status" value="1"/>
</dbReference>
<reference key="1">
    <citation type="journal article" date="2008" name="Environ. Microbiol.">
        <title>The complete genome sequence of Moorella thermoacetica (f. Clostridium thermoaceticum).</title>
        <authorList>
            <person name="Pierce E."/>
            <person name="Xie G."/>
            <person name="Barabote R.D."/>
            <person name="Saunders E."/>
            <person name="Han C.S."/>
            <person name="Detter J.C."/>
            <person name="Richardson P."/>
            <person name="Brettin T.S."/>
            <person name="Das A."/>
            <person name="Ljungdahl L.G."/>
            <person name="Ragsdale S.W."/>
        </authorList>
    </citation>
    <scope>NUCLEOTIDE SEQUENCE [LARGE SCALE GENOMIC DNA]</scope>
    <source>
        <strain>ATCC 39073 / JCM 9320</strain>
    </source>
</reference>
<feature type="chain" id="PRO_0000230005" description="Gamma-glutamyl phosphate reductase">
    <location>
        <begin position="1"/>
        <end position="418"/>
    </location>
</feature>
<keyword id="KW-0028">Amino-acid biosynthesis</keyword>
<keyword id="KW-0963">Cytoplasm</keyword>
<keyword id="KW-0521">NADP</keyword>
<keyword id="KW-0560">Oxidoreductase</keyword>
<keyword id="KW-0641">Proline biosynthesis</keyword>
<comment type="function">
    <text evidence="1">Catalyzes the NADPH-dependent reduction of L-glutamate 5-phosphate into L-glutamate 5-semialdehyde and phosphate. The product spontaneously undergoes cyclization to form 1-pyrroline-5-carboxylate.</text>
</comment>
<comment type="catalytic activity">
    <reaction evidence="1">
        <text>L-glutamate 5-semialdehyde + phosphate + NADP(+) = L-glutamyl 5-phosphate + NADPH + H(+)</text>
        <dbReference type="Rhea" id="RHEA:19541"/>
        <dbReference type="ChEBI" id="CHEBI:15378"/>
        <dbReference type="ChEBI" id="CHEBI:43474"/>
        <dbReference type="ChEBI" id="CHEBI:57783"/>
        <dbReference type="ChEBI" id="CHEBI:58066"/>
        <dbReference type="ChEBI" id="CHEBI:58274"/>
        <dbReference type="ChEBI" id="CHEBI:58349"/>
        <dbReference type="EC" id="1.2.1.41"/>
    </reaction>
</comment>
<comment type="pathway">
    <text evidence="1">Amino-acid biosynthesis; L-proline biosynthesis; L-glutamate 5-semialdehyde from L-glutamate: step 2/2.</text>
</comment>
<comment type="subcellular location">
    <subcellularLocation>
        <location evidence="1">Cytoplasm</location>
    </subcellularLocation>
</comment>
<comment type="similarity">
    <text evidence="1">Belongs to the gamma-glutamyl phosphate reductase family.</text>
</comment>
<proteinExistence type="inferred from homology"/>